<name>MRAY_HELPJ</name>
<protein>
    <recommendedName>
        <fullName evidence="1">Phospho-N-acetylmuramoyl-pentapeptide-transferase</fullName>
        <ecNumber evidence="1">2.7.8.13</ecNumber>
    </recommendedName>
    <alternativeName>
        <fullName evidence="1">UDP-MurNAc-pentapeptide phosphotransferase</fullName>
    </alternativeName>
</protein>
<sequence>MLYSLLYGYFNINLFQYLTFRAGLGFFIAFFLTLFLMPKFILWAKAKKANQPISSFVPSHQNKKDTPTMGGIVFVFATIVASVLCASLSNLYVLLGIIVLVGFSFVGFRDDYTKINQQNNAGMSAKMKFGMLFILSLIVSVLLSLKGLDTFLYAPFLKNPLFEMPTMLAVGFWVLVFLSTSNAVNLTDGLDGLASVPSIFTLLSLSIFVYVAGNAEFSKYLLYPKVIDVGELFVISLALVGSLFGFLWYNCNPASVFMGDSGSLAIGGFIAYNAIVSHNEILLVLMGSIFVIETLSVILQVGSYKTRKKRLFLMAPIHHHFEQKGWAENKVIVRFWIISMLSNLVALLSLKVC</sequence>
<proteinExistence type="inferred from homology"/>
<gene>
    <name evidence="1" type="primary">mraY</name>
    <name type="ordered locus">jhp_0445</name>
</gene>
<accession>Q9ZLY1</accession>
<dbReference type="EC" id="2.7.8.13" evidence="1"/>
<dbReference type="EMBL" id="AE001439">
    <property type="protein sequence ID" value="AAD06023.1"/>
    <property type="molecule type" value="Genomic_DNA"/>
</dbReference>
<dbReference type="PIR" id="B71930">
    <property type="entry name" value="B71930"/>
</dbReference>
<dbReference type="RefSeq" id="WP_000967137.1">
    <property type="nucleotide sequence ID" value="NC_000921.1"/>
</dbReference>
<dbReference type="SMR" id="Q9ZLY1"/>
<dbReference type="KEGG" id="hpj:jhp_0445"/>
<dbReference type="eggNOG" id="COG0472">
    <property type="taxonomic scope" value="Bacteria"/>
</dbReference>
<dbReference type="UniPathway" id="UPA00219"/>
<dbReference type="Proteomes" id="UP000000804">
    <property type="component" value="Chromosome"/>
</dbReference>
<dbReference type="GO" id="GO:0005886">
    <property type="term" value="C:plasma membrane"/>
    <property type="evidence" value="ECO:0007669"/>
    <property type="project" value="UniProtKB-SubCell"/>
</dbReference>
<dbReference type="GO" id="GO:0046872">
    <property type="term" value="F:metal ion binding"/>
    <property type="evidence" value="ECO:0007669"/>
    <property type="project" value="UniProtKB-KW"/>
</dbReference>
<dbReference type="GO" id="GO:0008963">
    <property type="term" value="F:phospho-N-acetylmuramoyl-pentapeptide-transferase activity"/>
    <property type="evidence" value="ECO:0007669"/>
    <property type="project" value="UniProtKB-UniRule"/>
</dbReference>
<dbReference type="GO" id="GO:0051992">
    <property type="term" value="F:UDP-N-acetylmuramoyl-L-alanyl-D-glutamyl-meso-2,6-diaminopimelyl-D-alanyl-D-alanine:undecaprenyl-phosphate transferase activity"/>
    <property type="evidence" value="ECO:0007669"/>
    <property type="project" value="RHEA"/>
</dbReference>
<dbReference type="GO" id="GO:0051301">
    <property type="term" value="P:cell division"/>
    <property type="evidence" value="ECO:0007669"/>
    <property type="project" value="UniProtKB-KW"/>
</dbReference>
<dbReference type="GO" id="GO:0071555">
    <property type="term" value="P:cell wall organization"/>
    <property type="evidence" value="ECO:0007669"/>
    <property type="project" value="UniProtKB-KW"/>
</dbReference>
<dbReference type="GO" id="GO:0009252">
    <property type="term" value="P:peptidoglycan biosynthetic process"/>
    <property type="evidence" value="ECO:0007669"/>
    <property type="project" value="UniProtKB-UniRule"/>
</dbReference>
<dbReference type="GO" id="GO:0008360">
    <property type="term" value="P:regulation of cell shape"/>
    <property type="evidence" value="ECO:0007669"/>
    <property type="project" value="UniProtKB-KW"/>
</dbReference>
<dbReference type="CDD" id="cd06852">
    <property type="entry name" value="GT_MraY"/>
    <property type="match status" value="1"/>
</dbReference>
<dbReference type="HAMAP" id="MF_00038">
    <property type="entry name" value="MraY"/>
    <property type="match status" value="1"/>
</dbReference>
<dbReference type="InterPro" id="IPR000715">
    <property type="entry name" value="Glycosyl_transferase_4"/>
</dbReference>
<dbReference type="InterPro" id="IPR003524">
    <property type="entry name" value="PNAcMuramoyl-5peptid_Trfase"/>
</dbReference>
<dbReference type="InterPro" id="IPR018480">
    <property type="entry name" value="PNAcMuramoyl-5peptid_Trfase_CS"/>
</dbReference>
<dbReference type="NCBIfam" id="TIGR00445">
    <property type="entry name" value="mraY"/>
    <property type="match status" value="1"/>
</dbReference>
<dbReference type="PANTHER" id="PTHR22926">
    <property type="entry name" value="PHOSPHO-N-ACETYLMURAMOYL-PENTAPEPTIDE-TRANSFERASE"/>
    <property type="match status" value="1"/>
</dbReference>
<dbReference type="PANTHER" id="PTHR22926:SF5">
    <property type="entry name" value="PHOSPHO-N-ACETYLMURAMOYL-PENTAPEPTIDE-TRANSFERASE HOMOLOG"/>
    <property type="match status" value="1"/>
</dbReference>
<dbReference type="Pfam" id="PF00953">
    <property type="entry name" value="Glycos_transf_4"/>
    <property type="match status" value="1"/>
</dbReference>
<dbReference type="Pfam" id="PF10555">
    <property type="entry name" value="MraY_sig1"/>
    <property type="match status" value="1"/>
</dbReference>
<dbReference type="PROSITE" id="PS01347">
    <property type="entry name" value="MRAY_1"/>
    <property type="match status" value="1"/>
</dbReference>
<dbReference type="PROSITE" id="PS01348">
    <property type="entry name" value="MRAY_2"/>
    <property type="match status" value="1"/>
</dbReference>
<comment type="function">
    <text evidence="1">Catalyzes the initial step of the lipid cycle reactions in the biosynthesis of the cell wall peptidoglycan: transfers peptidoglycan precursor phospho-MurNAc-pentapeptide from UDP-MurNAc-pentapeptide onto the lipid carrier undecaprenyl phosphate, yielding undecaprenyl-pyrophosphoryl-MurNAc-pentapeptide, known as lipid I.</text>
</comment>
<comment type="catalytic activity">
    <reaction evidence="1">
        <text>UDP-N-acetyl-alpha-D-muramoyl-L-alanyl-gamma-D-glutamyl-meso-2,6-diaminopimeloyl-D-alanyl-D-alanine + di-trans,octa-cis-undecaprenyl phosphate = di-trans,octa-cis-undecaprenyl diphospho-N-acetyl-alpha-D-muramoyl-L-alanyl-D-glutamyl-meso-2,6-diaminopimeloyl-D-alanyl-D-alanine + UMP</text>
        <dbReference type="Rhea" id="RHEA:28386"/>
        <dbReference type="ChEBI" id="CHEBI:57865"/>
        <dbReference type="ChEBI" id="CHEBI:60392"/>
        <dbReference type="ChEBI" id="CHEBI:61386"/>
        <dbReference type="ChEBI" id="CHEBI:61387"/>
        <dbReference type="EC" id="2.7.8.13"/>
    </reaction>
</comment>
<comment type="cofactor">
    <cofactor evidence="1">
        <name>Mg(2+)</name>
        <dbReference type="ChEBI" id="CHEBI:18420"/>
    </cofactor>
</comment>
<comment type="pathway">
    <text evidence="1">Cell wall biogenesis; peptidoglycan biosynthesis.</text>
</comment>
<comment type="subcellular location">
    <subcellularLocation>
        <location evidence="1">Cell inner membrane</location>
        <topology evidence="1">Multi-pass membrane protein</topology>
    </subcellularLocation>
</comment>
<comment type="similarity">
    <text evidence="1">Belongs to the glycosyltransferase 4 family. MraY subfamily.</text>
</comment>
<feature type="chain" id="PRO_0000108837" description="Phospho-N-acetylmuramoyl-pentapeptide-transferase">
    <location>
        <begin position="1"/>
        <end position="353"/>
    </location>
</feature>
<feature type="transmembrane region" description="Helical" evidence="1">
    <location>
        <begin position="24"/>
        <end position="44"/>
    </location>
</feature>
<feature type="transmembrane region" description="Helical" evidence="1">
    <location>
        <begin position="66"/>
        <end position="86"/>
    </location>
</feature>
<feature type="transmembrane region" description="Helical" evidence="1">
    <location>
        <begin position="88"/>
        <end position="108"/>
    </location>
</feature>
<feature type="transmembrane region" description="Helical" evidence="1">
    <location>
        <begin position="129"/>
        <end position="149"/>
    </location>
</feature>
<feature type="transmembrane region" description="Helical" evidence="1">
    <location>
        <begin position="160"/>
        <end position="180"/>
    </location>
</feature>
<feature type="transmembrane region" description="Helical" evidence="1">
    <location>
        <begin position="192"/>
        <end position="212"/>
    </location>
</feature>
<feature type="transmembrane region" description="Helical" evidence="1">
    <location>
        <begin position="229"/>
        <end position="249"/>
    </location>
</feature>
<feature type="transmembrane region" description="Helical" evidence="1">
    <location>
        <begin position="256"/>
        <end position="276"/>
    </location>
</feature>
<feature type="transmembrane region" description="Helical" evidence="1">
    <location>
        <begin position="281"/>
        <end position="301"/>
    </location>
</feature>
<feature type="transmembrane region" description="Helical" evidence="1">
    <location>
        <begin position="330"/>
        <end position="350"/>
    </location>
</feature>
<reference key="1">
    <citation type="journal article" date="1999" name="Nature">
        <title>Genomic sequence comparison of two unrelated isolates of the human gastric pathogen Helicobacter pylori.</title>
        <authorList>
            <person name="Alm R.A."/>
            <person name="Ling L.-S.L."/>
            <person name="Moir D.T."/>
            <person name="King B.L."/>
            <person name="Brown E.D."/>
            <person name="Doig P.C."/>
            <person name="Smith D.R."/>
            <person name="Noonan B."/>
            <person name="Guild B.C."/>
            <person name="deJonge B.L."/>
            <person name="Carmel G."/>
            <person name="Tummino P.J."/>
            <person name="Caruso A."/>
            <person name="Uria-Nickelsen M."/>
            <person name="Mills D.M."/>
            <person name="Ives C."/>
            <person name="Gibson R."/>
            <person name="Merberg D."/>
            <person name="Mills S.D."/>
            <person name="Jiang Q."/>
            <person name="Taylor D.E."/>
            <person name="Vovis G.F."/>
            <person name="Trust T.J."/>
        </authorList>
    </citation>
    <scope>NUCLEOTIDE SEQUENCE [LARGE SCALE GENOMIC DNA]</scope>
    <source>
        <strain>J99 / ATCC 700824</strain>
    </source>
</reference>
<organism>
    <name type="scientific">Helicobacter pylori (strain J99 / ATCC 700824)</name>
    <name type="common">Campylobacter pylori J99</name>
    <dbReference type="NCBI Taxonomy" id="85963"/>
    <lineage>
        <taxon>Bacteria</taxon>
        <taxon>Pseudomonadati</taxon>
        <taxon>Campylobacterota</taxon>
        <taxon>Epsilonproteobacteria</taxon>
        <taxon>Campylobacterales</taxon>
        <taxon>Helicobacteraceae</taxon>
        <taxon>Helicobacter</taxon>
    </lineage>
</organism>
<keyword id="KW-0131">Cell cycle</keyword>
<keyword id="KW-0132">Cell division</keyword>
<keyword id="KW-0997">Cell inner membrane</keyword>
<keyword id="KW-1003">Cell membrane</keyword>
<keyword id="KW-0133">Cell shape</keyword>
<keyword id="KW-0961">Cell wall biogenesis/degradation</keyword>
<keyword id="KW-0460">Magnesium</keyword>
<keyword id="KW-0472">Membrane</keyword>
<keyword id="KW-0479">Metal-binding</keyword>
<keyword id="KW-0573">Peptidoglycan synthesis</keyword>
<keyword id="KW-0808">Transferase</keyword>
<keyword id="KW-0812">Transmembrane</keyword>
<keyword id="KW-1133">Transmembrane helix</keyword>
<evidence type="ECO:0000255" key="1">
    <source>
        <dbReference type="HAMAP-Rule" id="MF_00038"/>
    </source>
</evidence>